<reference key="1">
    <citation type="journal article" date="2005" name="J. Bacteriol.">
        <title>Insights on evolution of virulence and resistance from the complete genome analysis of an early methicillin-resistant Staphylococcus aureus strain and a biofilm-producing methicillin-resistant Staphylococcus epidermidis strain.</title>
        <authorList>
            <person name="Gill S.R."/>
            <person name="Fouts D.E."/>
            <person name="Archer G.L."/>
            <person name="Mongodin E.F."/>
            <person name="DeBoy R.T."/>
            <person name="Ravel J."/>
            <person name="Paulsen I.T."/>
            <person name="Kolonay J.F."/>
            <person name="Brinkac L.M."/>
            <person name="Beanan M.J."/>
            <person name="Dodson R.J."/>
            <person name="Daugherty S.C."/>
            <person name="Madupu R."/>
            <person name="Angiuoli S.V."/>
            <person name="Durkin A.S."/>
            <person name="Haft D.H."/>
            <person name="Vamathevan J.J."/>
            <person name="Khouri H."/>
            <person name="Utterback T.R."/>
            <person name="Lee C."/>
            <person name="Dimitrov G."/>
            <person name="Jiang L."/>
            <person name="Qin H."/>
            <person name="Weidman J."/>
            <person name="Tran K."/>
            <person name="Kang K.H."/>
            <person name="Hance I.R."/>
            <person name="Nelson K.E."/>
            <person name="Fraser C.M."/>
        </authorList>
    </citation>
    <scope>NUCLEOTIDE SEQUENCE [LARGE SCALE GENOMIC DNA]</scope>
    <source>
        <strain>ATCC 35984 / DSM 28319 / BCRC 17069 / CCUG 31568 / BM 3577 / RP62A</strain>
    </source>
</reference>
<dbReference type="EMBL" id="CP000029">
    <property type="protein sequence ID" value="AAW53941.1"/>
    <property type="molecule type" value="Genomic_DNA"/>
</dbReference>
<dbReference type="RefSeq" id="WP_001832516.1">
    <property type="nucleotide sequence ID" value="NC_002976.3"/>
</dbReference>
<dbReference type="SMR" id="Q5HQL0"/>
<dbReference type="STRING" id="176279.SERP0538"/>
<dbReference type="KEGG" id="ser:SERP0538"/>
<dbReference type="eggNOG" id="COG1009">
    <property type="taxonomic scope" value="Bacteria"/>
</dbReference>
<dbReference type="eggNOG" id="COG2111">
    <property type="taxonomic scope" value="Bacteria"/>
</dbReference>
<dbReference type="HOGENOM" id="CLU_007100_2_1_9"/>
<dbReference type="Proteomes" id="UP000000531">
    <property type="component" value="Chromosome"/>
</dbReference>
<dbReference type="GO" id="GO:0005886">
    <property type="term" value="C:plasma membrane"/>
    <property type="evidence" value="ECO:0007669"/>
    <property type="project" value="UniProtKB-SubCell"/>
</dbReference>
<dbReference type="GO" id="GO:0015297">
    <property type="term" value="F:antiporter activity"/>
    <property type="evidence" value="ECO:0007669"/>
    <property type="project" value="UniProtKB-KW"/>
</dbReference>
<dbReference type="GO" id="GO:1902600">
    <property type="term" value="P:proton transmembrane transport"/>
    <property type="evidence" value="ECO:0007669"/>
    <property type="project" value="UniProtKB-KW"/>
</dbReference>
<dbReference type="GO" id="GO:0006814">
    <property type="term" value="P:sodium ion transport"/>
    <property type="evidence" value="ECO:0007669"/>
    <property type="project" value="UniProtKB-KW"/>
</dbReference>
<dbReference type="InterPro" id="IPR050616">
    <property type="entry name" value="CPA3_Na-H_Antiporter_A"/>
</dbReference>
<dbReference type="InterPro" id="IPR005663">
    <property type="entry name" value="MrpA/MnhA1/PhaAB"/>
</dbReference>
<dbReference type="InterPro" id="IPR025383">
    <property type="entry name" value="MrpA_C/MbhD"/>
</dbReference>
<dbReference type="InterPro" id="IPR046806">
    <property type="entry name" value="MrpA_C/MbhE"/>
</dbReference>
<dbReference type="InterPro" id="IPR001750">
    <property type="entry name" value="ND/Mrp_TM"/>
</dbReference>
<dbReference type="InterPro" id="IPR001516">
    <property type="entry name" value="Proton_antipo_N"/>
</dbReference>
<dbReference type="NCBIfam" id="TIGR00940">
    <property type="entry name" value="2a6301s01"/>
    <property type="match status" value="1"/>
</dbReference>
<dbReference type="NCBIfam" id="NF009285">
    <property type="entry name" value="PRK12645.1"/>
    <property type="match status" value="1"/>
</dbReference>
<dbReference type="PANTHER" id="PTHR43373">
    <property type="entry name" value="NA(+)/H(+) ANTIPORTER SUBUNIT"/>
    <property type="match status" value="1"/>
</dbReference>
<dbReference type="PANTHER" id="PTHR43373:SF1">
    <property type="entry name" value="NA(+)_H(+) ANTIPORTER SUBUNIT A"/>
    <property type="match status" value="1"/>
</dbReference>
<dbReference type="Pfam" id="PF13244">
    <property type="entry name" value="MbhD"/>
    <property type="match status" value="1"/>
</dbReference>
<dbReference type="Pfam" id="PF20501">
    <property type="entry name" value="MbhE"/>
    <property type="match status" value="1"/>
</dbReference>
<dbReference type="Pfam" id="PF00361">
    <property type="entry name" value="Proton_antipo_M"/>
    <property type="match status" value="1"/>
</dbReference>
<dbReference type="Pfam" id="PF00662">
    <property type="entry name" value="Proton_antipo_N"/>
    <property type="match status" value="1"/>
</dbReference>
<dbReference type="PRINTS" id="PR01434">
    <property type="entry name" value="NADHDHGNASE5"/>
</dbReference>
<dbReference type="PRINTS" id="PR01435">
    <property type="entry name" value="NPOXDRDTASE5"/>
</dbReference>
<gene>
    <name type="primary">mnhA1</name>
    <name type="ordered locus">SERP0538</name>
</gene>
<evidence type="ECO:0000250" key="1"/>
<evidence type="ECO:0000255" key="2"/>
<evidence type="ECO:0000305" key="3"/>
<sequence>MSLLHIAVLLPLIFALIIPFLYRFVKRIHLGWFVLPVPIVLFIYFISLISMTMSGNNVMKNLNWMPHIGMNFNLYVDGLGLLFSLLITGIGSLVVLYSIGYLSKSEQLGNFYCYLLLFMGAMLGVVLSDNFIILYLFWELTSFSSFLLISFWREKKASIYGAQKSLIITVLGGLSMLGGIILLSLATDTFSIQAMISKASDIQNSPFFILVMILFMIGAFTKSAQVPFYIWLPDAMEAPTPVSAYLHSATMVKAGLYLIARITPIFAISEGWVWTITLVGLITLFWASLNATKQHDLKGILAFSTVSQLGMIMSMLGIGAVSYHYQGANSQLYVAGFVAAIFHLINHATFKGALFMITGGIDHSTGTRDVKKLGGLLTIMPISFTLTVITTLSMAGVPPFNGFLSKEKFLESMINVTHLNLMSLNTLGILLPIIAIIGSIFTFVYSIKFILHIFFGSYKPEALPKQAHESSILMLISPIILTSLVIVFGLFPSILTQSIIEPASVAVSQTSNITAEFHLFHGITPAFLSTIGIYIIGILLLISFSYWVRLLQAHPYQLTLNHWYDTSGQRIPGYSENITNSYVTGFSRNNLVIILGILIALTFVTVISVPFSIDFKNVSHLRVFEGATVLFLLIASTFIIFAKSRLFSIIMLSAVGYAISVLFIFFKAPDLALTQFVVESISTALFLLCFYHLPNLNRYNEKPTFKLTNAVISIGVGLSVIILGLIGYGNRHFDSITKFYQEHVFDLAHGKNMVNVILVDFRGMDTLFESSVLGIAGLGVYTMIKLRLKQKNQSSEVNDHE</sequence>
<name>MNHA1_STAEQ</name>
<keyword id="KW-0050">Antiport</keyword>
<keyword id="KW-1003">Cell membrane</keyword>
<keyword id="KW-0375">Hydrogen ion transport</keyword>
<keyword id="KW-0406">Ion transport</keyword>
<keyword id="KW-0472">Membrane</keyword>
<keyword id="KW-1185">Reference proteome</keyword>
<keyword id="KW-0915">Sodium</keyword>
<keyword id="KW-0739">Sodium transport</keyword>
<keyword id="KW-0812">Transmembrane</keyword>
<keyword id="KW-1133">Transmembrane helix</keyword>
<keyword id="KW-0813">Transport</keyword>
<protein>
    <recommendedName>
        <fullName>Na(+)/H(+) antiporter subunit A1</fullName>
    </recommendedName>
    <alternativeName>
        <fullName>Mnh complex subunit A1</fullName>
    </alternativeName>
</protein>
<proteinExistence type="inferred from homology"/>
<organism>
    <name type="scientific">Staphylococcus epidermidis (strain ATCC 35984 / DSM 28319 / BCRC 17069 / CCUG 31568 / BM 3577 / RP62A)</name>
    <dbReference type="NCBI Taxonomy" id="176279"/>
    <lineage>
        <taxon>Bacteria</taxon>
        <taxon>Bacillati</taxon>
        <taxon>Bacillota</taxon>
        <taxon>Bacilli</taxon>
        <taxon>Bacillales</taxon>
        <taxon>Staphylococcaceae</taxon>
        <taxon>Staphylococcus</taxon>
    </lineage>
</organism>
<feature type="chain" id="PRO_0000372102" description="Na(+)/H(+) antiporter subunit A1">
    <location>
        <begin position="1"/>
        <end position="801"/>
    </location>
</feature>
<feature type="transmembrane region" description="Helical" evidence="2">
    <location>
        <begin position="1"/>
        <end position="21"/>
    </location>
</feature>
<feature type="transmembrane region" description="Helical" evidence="2">
    <location>
        <begin position="30"/>
        <end position="50"/>
    </location>
</feature>
<feature type="transmembrane region" description="Helical" evidence="2">
    <location>
        <begin position="79"/>
        <end position="99"/>
    </location>
</feature>
<feature type="transmembrane region" description="Helical" evidence="2">
    <location>
        <begin position="117"/>
        <end position="137"/>
    </location>
</feature>
<feature type="transmembrane region" description="Helical" evidence="2">
    <location>
        <begin position="166"/>
        <end position="186"/>
    </location>
</feature>
<feature type="transmembrane region" description="Helical" evidence="2">
    <location>
        <begin position="206"/>
        <end position="226"/>
    </location>
</feature>
<feature type="transmembrane region" description="Helical" evidence="2">
    <location>
        <begin position="228"/>
        <end position="250"/>
    </location>
</feature>
<feature type="transmembrane region" description="Helical" evidence="2">
    <location>
        <begin position="265"/>
        <end position="285"/>
    </location>
</feature>
<feature type="transmembrane region" description="Helical" evidence="2">
    <location>
        <begin position="300"/>
        <end position="320"/>
    </location>
</feature>
<feature type="transmembrane region" description="Helical" evidence="2">
    <location>
        <begin position="337"/>
        <end position="357"/>
    </location>
</feature>
<feature type="transmembrane region" description="Helical" evidence="2">
    <location>
        <begin position="373"/>
        <end position="393"/>
    </location>
</feature>
<feature type="transmembrane region" description="Helical" evidence="2">
    <location>
        <begin position="427"/>
        <end position="447"/>
    </location>
</feature>
<feature type="transmembrane region" description="Helical" evidence="2">
    <location>
        <begin position="472"/>
        <end position="492"/>
    </location>
</feature>
<feature type="transmembrane region" description="Helical" evidence="2">
    <location>
        <begin position="522"/>
        <end position="542"/>
    </location>
</feature>
<feature type="transmembrane region" description="Helical" evidence="2">
    <location>
        <begin position="591"/>
        <end position="611"/>
    </location>
</feature>
<feature type="transmembrane region" description="Helical" evidence="2">
    <location>
        <begin position="623"/>
        <end position="643"/>
    </location>
</feature>
<feature type="transmembrane region" description="Helical" evidence="2">
    <location>
        <begin position="646"/>
        <end position="666"/>
    </location>
</feature>
<feature type="transmembrane region" description="Helical" evidence="2">
    <location>
        <begin position="671"/>
        <end position="691"/>
    </location>
</feature>
<feature type="transmembrane region" description="Helical" evidence="2">
    <location>
        <begin position="707"/>
        <end position="727"/>
    </location>
</feature>
<feature type="transmembrane region" description="Helical" evidence="2">
    <location>
        <begin position="764"/>
        <end position="784"/>
    </location>
</feature>
<comment type="function">
    <text evidence="1">Mnh complex is a Na(+)/H(+) antiporter involved in Na(+) excretion.</text>
</comment>
<comment type="subunit">
    <text evidence="1">May form a heterooligomeric complex that consists of seven subunits: mnhA1, mnhB1, mnhC1, mnhD1, mnhE1, mnhF1 and mnhG1.</text>
</comment>
<comment type="subcellular location">
    <subcellularLocation>
        <location evidence="3">Cell membrane</location>
        <topology evidence="3">Multi-pass membrane protein</topology>
    </subcellularLocation>
</comment>
<comment type="similarity">
    <text evidence="3">Belongs to the CPA3 antiporters (TC 2.A.63) subunit A family.</text>
</comment>
<accession>Q5HQL0</accession>